<gene>
    <name evidence="1" type="primary">thiG</name>
    <name type="ordered locus">Pcryo_0248</name>
</gene>
<comment type="function">
    <text evidence="1">Catalyzes the rearrangement of 1-deoxy-D-xylulose 5-phosphate (DXP) to produce the thiazole phosphate moiety of thiamine. Sulfur is provided by the thiocarboxylate moiety of the carrier protein ThiS. In vitro, sulfur can be provided by H(2)S.</text>
</comment>
<comment type="catalytic activity">
    <reaction evidence="1">
        <text>[ThiS sulfur-carrier protein]-C-terminal-Gly-aminoethanethioate + 2-iminoacetate + 1-deoxy-D-xylulose 5-phosphate = [ThiS sulfur-carrier protein]-C-terminal Gly-Gly + 2-[(2R,5Z)-2-carboxy-4-methylthiazol-5(2H)-ylidene]ethyl phosphate + 2 H2O + H(+)</text>
        <dbReference type="Rhea" id="RHEA:26297"/>
        <dbReference type="Rhea" id="RHEA-COMP:12909"/>
        <dbReference type="Rhea" id="RHEA-COMP:19908"/>
        <dbReference type="ChEBI" id="CHEBI:15377"/>
        <dbReference type="ChEBI" id="CHEBI:15378"/>
        <dbReference type="ChEBI" id="CHEBI:57792"/>
        <dbReference type="ChEBI" id="CHEBI:62899"/>
        <dbReference type="ChEBI" id="CHEBI:77846"/>
        <dbReference type="ChEBI" id="CHEBI:90778"/>
        <dbReference type="ChEBI" id="CHEBI:232372"/>
        <dbReference type="EC" id="2.8.1.10"/>
    </reaction>
</comment>
<comment type="pathway">
    <text evidence="1">Cofactor biosynthesis; thiamine diphosphate biosynthesis.</text>
</comment>
<comment type="subunit">
    <text evidence="1">Homotetramer. Forms heterodimers with either ThiH or ThiS.</text>
</comment>
<comment type="subcellular location">
    <subcellularLocation>
        <location evidence="1">Cytoplasm</location>
    </subcellularLocation>
</comment>
<comment type="similarity">
    <text evidence="1">Belongs to the ThiG family.</text>
</comment>
<reference key="1">
    <citation type="submission" date="2006-03" db="EMBL/GenBank/DDBJ databases">
        <title>Complete sequence of chromosome of Psychrobacter cryohalolentis K5.</title>
        <authorList>
            <consortium name="US DOE Joint Genome Institute"/>
            <person name="Copeland A."/>
            <person name="Lucas S."/>
            <person name="Lapidus A."/>
            <person name="Barry K."/>
            <person name="Detter J.C."/>
            <person name="Glavina T."/>
            <person name="Hammon N."/>
            <person name="Israni S."/>
            <person name="Dalin E."/>
            <person name="Tice H."/>
            <person name="Pitluck S."/>
            <person name="Brettin T."/>
            <person name="Bruce D."/>
            <person name="Han C."/>
            <person name="Tapia R."/>
            <person name="Sims D.R."/>
            <person name="Gilna P."/>
            <person name="Schmutz J."/>
            <person name="Larimer F."/>
            <person name="Land M."/>
            <person name="Hauser L."/>
            <person name="Kyrpides N."/>
            <person name="Kim E."/>
            <person name="Richardson P."/>
        </authorList>
    </citation>
    <scope>NUCLEOTIDE SEQUENCE [LARGE SCALE GENOMIC DNA]</scope>
    <source>
        <strain>ATCC BAA-1226 / DSM 17306 / VKM B-2378 / K5</strain>
    </source>
</reference>
<evidence type="ECO:0000255" key="1">
    <source>
        <dbReference type="HAMAP-Rule" id="MF_00443"/>
    </source>
</evidence>
<name>THIG_PSYCK</name>
<dbReference type="EC" id="2.8.1.10" evidence="1"/>
<dbReference type="EMBL" id="CP000323">
    <property type="protein sequence ID" value="ABE74032.1"/>
    <property type="molecule type" value="Genomic_DNA"/>
</dbReference>
<dbReference type="RefSeq" id="WP_011512620.1">
    <property type="nucleotide sequence ID" value="NC_007969.1"/>
</dbReference>
<dbReference type="SMR" id="Q1QE71"/>
<dbReference type="STRING" id="335284.Pcryo_0248"/>
<dbReference type="KEGG" id="pcr:Pcryo_0248"/>
<dbReference type="eggNOG" id="COG2022">
    <property type="taxonomic scope" value="Bacteria"/>
</dbReference>
<dbReference type="HOGENOM" id="CLU_062233_1_1_6"/>
<dbReference type="UniPathway" id="UPA00060"/>
<dbReference type="Proteomes" id="UP000002425">
    <property type="component" value="Chromosome"/>
</dbReference>
<dbReference type="GO" id="GO:0005737">
    <property type="term" value="C:cytoplasm"/>
    <property type="evidence" value="ECO:0007669"/>
    <property type="project" value="UniProtKB-SubCell"/>
</dbReference>
<dbReference type="GO" id="GO:1990107">
    <property type="term" value="F:thiazole synthase activity"/>
    <property type="evidence" value="ECO:0007669"/>
    <property type="project" value="UniProtKB-EC"/>
</dbReference>
<dbReference type="GO" id="GO:0009229">
    <property type="term" value="P:thiamine diphosphate biosynthetic process"/>
    <property type="evidence" value="ECO:0007669"/>
    <property type="project" value="UniProtKB-UniRule"/>
</dbReference>
<dbReference type="CDD" id="cd04728">
    <property type="entry name" value="ThiG"/>
    <property type="match status" value="1"/>
</dbReference>
<dbReference type="Gene3D" id="3.20.20.70">
    <property type="entry name" value="Aldolase class I"/>
    <property type="match status" value="1"/>
</dbReference>
<dbReference type="HAMAP" id="MF_00443">
    <property type="entry name" value="ThiG"/>
    <property type="match status" value="1"/>
</dbReference>
<dbReference type="InterPro" id="IPR013785">
    <property type="entry name" value="Aldolase_TIM"/>
</dbReference>
<dbReference type="InterPro" id="IPR033983">
    <property type="entry name" value="Thiazole_synthase_ThiG"/>
</dbReference>
<dbReference type="InterPro" id="IPR008867">
    <property type="entry name" value="ThiG"/>
</dbReference>
<dbReference type="PANTHER" id="PTHR34266">
    <property type="entry name" value="THIAZOLE SYNTHASE"/>
    <property type="match status" value="1"/>
</dbReference>
<dbReference type="PANTHER" id="PTHR34266:SF2">
    <property type="entry name" value="THIAZOLE SYNTHASE"/>
    <property type="match status" value="1"/>
</dbReference>
<dbReference type="Pfam" id="PF05690">
    <property type="entry name" value="ThiG"/>
    <property type="match status" value="1"/>
</dbReference>
<dbReference type="SUPFAM" id="SSF110399">
    <property type="entry name" value="ThiG-like"/>
    <property type="match status" value="1"/>
</dbReference>
<feature type="chain" id="PRO_1000026032" description="Thiazole synthase">
    <location>
        <begin position="1"/>
        <end position="274"/>
    </location>
</feature>
<feature type="active site" description="Schiff-base intermediate with DXP" evidence="1">
    <location>
        <position position="115"/>
    </location>
</feature>
<feature type="binding site" evidence="1">
    <location>
        <position position="176"/>
    </location>
    <ligand>
        <name>1-deoxy-D-xylulose 5-phosphate</name>
        <dbReference type="ChEBI" id="CHEBI:57792"/>
    </ligand>
</feature>
<feature type="binding site" evidence="1">
    <location>
        <begin position="202"/>
        <end position="203"/>
    </location>
    <ligand>
        <name>1-deoxy-D-xylulose 5-phosphate</name>
        <dbReference type="ChEBI" id="CHEBI:57792"/>
    </ligand>
</feature>
<feature type="binding site" evidence="1">
    <location>
        <begin position="224"/>
        <end position="225"/>
    </location>
    <ligand>
        <name>1-deoxy-D-xylulose 5-phosphate</name>
        <dbReference type="ChEBI" id="CHEBI:57792"/>
    </ligand>
</feature>
<organism>
    <name type="scientific">Psychrobacter cryohalolentis (strain ATCC BAA-1226 / DSM 17306 / VKM B-2378 / K5)</name>
    <dbReference type="NCBI Taxonomy" id="335284"/>
    <lineage>
        <taxon>Bacteria</taxon>
        <taxon>Pseudomonadati</taxon>
        <taxon>Pseudomonadota</taxon>
        <taxon>Gammaproteobacteria</taxon>
        <taxon>Moraxellales</taxon>
        <taxon>Moraxellaceae</taxon>
        <taxon>Psychrobacter</taxon>
    </lineage>
</organism>
<keyword id="KW-0963">Cytoplasm</keyword>
<keyword id="KW-0704">Schiff base</keyword>
<keyword id="KW-0784">Thiamine biosynthesis</keyword>
<keyword id="KW-0808">Transferase</keyword>
<sequence length="274" mass="29005">MSDNTSTATQSTPLLQDTFTVGSRTFSSRLLVGTGKYKDMTETGAAIGASAAEIVTVAIRRTNIGQNSNEPNLLDVISPDKYTILPNTAGCFDAETAIRTCKLARELLGGHNLVKLEVLGDEKTLYPNVMETLKAAKVLIDDGFEVMVYTSDDPIVAQELESMGCVAIMPLGSLIGSGLGLLNRHTLSLIIENAKVPVLVDAGVGTASDAAIAMELGCDGVLMNSAIANAQNPVMMAQAMKHAVWAGRQAFLAGRMPMRKMATASSPQTGYFFQ</sequence>
<proteinExistence type="inferred from homology"/>
<accession>Q1QE71</accession>
<protein>
    <recommendedName>
        <fullName evidence="1">Thiazole synthase</fullName>
        <ecNumber evidence="1">2.8.1.10</ecNumber>
    </recommendedName>
</protein>